<name>3SA7_NAJNA</name>
<protein>
    <recommendedName>
        <fullName evidence="6">Cytotoxin 7</fullName>
        <shortName evidence="5">CTX7</shortName>
    </recommendedName>
</protein>
<sequence length="60" mass="6792">LKCNKLIPLAYKTCPAGKDLCYKMYMVSNKTVPVKRGCIDVCPKNSLLVKYECCNTDRCN</sequence>
<feature type="chain" id="PRO_0000394688" description="Cytotoxin 7" evidence="3">
    <location>
        <begin position="1"/>
        <end position="60"/>
    </location>
</feature>
<feature type="disulfide bond" evidence="1">
    <location>
        <begin position="3"/>
        <end position="21"/>
    </location>
</feature>
<feature type="disulfide bond" evidence="1">
    <location>
        <begin position="14"/>
        <end position="38"/>
    </location>
</feature>
<feature type="disulfide bond" evidence="1">
    <location>
        <begin position="42"/>
        <end position="53"/>
    </location>
</feature>
<feature type="disulfide bond" evidence="1">
    <location>
        <begin position="54"/>
        <end position="59"/>
    </location>
</feature>
<proteinExistence type="evidence at protein level"/>
<comment type="function">
    <text evidence="1 2 4">Shows cytolytic activity on many different cells by forming pore in lipid membranes. In vivo, increases heart rate or kills the animal by cardiac arrest. In addition, it binds to heparin with high affinity, interacts with Kv channel-interacting protein 1 (KCNIP1) in a calcium-independent manner, and binds to integrin alpha-V/beta-3 (ITGAV/ITGB3) with moderate affinity (By similarity). Preferentially binds acidic phospholipids like phosphatidylserine, phosphatidic acid and phosphatidyl glycerol (PubMed:26456928). Has hemolytic activity towards human erythrocytes (EC(50)=0.171 uM) and cytolytic activity towards various cell lines (PubMed:26456928).</text>
</comment>
<comment type="subunit">
    <text evidence="1">Monomer in solution; Homodimer and oligomer in the presence of negatively charged lipids forming a pore with a size ranging between 20 and 30 Angstroms.</text>
</comment>
<comment type="subcellular location">
    <subcellularLocation>
        <location evidence="3 4">Secreted</location>
    </subcellularLocation>
    <subcellularLocation>
        <location evidence="1">Target cell membrane</location>
    </subcellularLocation>
</comment>
<comment type="tissue specificity">
    <text evidence="7">Expressed by the venom gland.</text>
</comment>
<comment type="miscellaneous">
    <text evidence="7">Is classified as a S-type cytotoxin, since a serine residue stands at position 28 (Ser-29 in standard classification).</text>
</comment>
<comment type="similarity">
    <text evidence="7">Belongs to the three-finger toxin family. Short-chain subfamily. Type IA cytotoxin sub-subfamily.</text>
</comment>
<keyword id="KW-0123">Cardiotoxin</keyword>
<keyword id="KW-0204">Cytolysis</keyword>
<keyword id="KW-0903">Direct protein sequencing</keyword>
<keyword id="KW-1015">Disulfide bond</keyword>
<keyword id="KW-0472">Membrane</keyword>
<keyword id="KW-1185">Reference proteome</keyword>
<keyword id="KW-0964">Secreted</keyword>
<keyword id="KW-1052">Target cell membrane</keyword>
<keyword id="KW-1053">Target membrane</keyword>
<keyword id="KW-0800">Toxin</keyword>
<reference key="1">
    <citation type="journal article" date="2010" name="Biomed. Res.">
        <title>Molecular diversity in venom proteins of the Russell's viper (Daboia russellii russellii) and the Indian cobra (Naja naja) in Sri Lanka.</title>
        <authorList>
            <person name="Suzuki M."/>
            <person name="Itoh T."/>
            <person name="Bandaranayake B.M.A.I.K."/>
            <person name="Ranasinghe J.G."/>
            <person name="Athauda S.B."/>
            <person name="Moriyama A."/>
        </authorList>
    </citation>
    <scope>PROTEIN SEQUENCE</scope>
    <scope>SUBCELLULAR LOCATION</scope>
    <source>
        <tissue>Venom</tissue>
    </source>
</reference>
<reference key="2">
    <citation type="journal article" date="2016" name="Comp. Biochem. Physiol.">
        <title>Comparison of the primary structures, cytotoxicities, and affinities to phospholipids of five kinds of cytotoxins from the venom of Indian cobra, Naja naja.</title>
        <authorList>
            <person name="Suzuki-Matsubara M."/>
            <person name="Athauda S.B.P."/>
            <person name="Suzuki Y."/>
            <person name="Matsubara R.A.K."/>
            <person name="Moriyama A."/>
        </authorList>
    </citation>
    <scope>FUNCTION</scope>
    <scope>SUBCELLULAR LOCATION</scope>
    <source>
        <tissue>Venom</tissue>
    </source>
</reference>
<dbReference type="SMR" id="P86382"/>
<dbReference type="Proteomes" id="UP000694559">
    <property type="component" value="Unplaced"/>
</dbReference>
<dbReference type="GO" id="GO:0005576">
    <property type="term" value="C:extracellular region"/>
    <property type="evidence" value="ECO:0007669"/>
    <property type="project" value="UniProtKB-SubCell"/>
</dbReference>
<dbReference type="GO" id="GO:0016020">
    <property type="term" value="C:membrane"/>
    <property type="evidence" value="ECO:0007669"/>
    <property type="project" value="UniProtKB-KW"/>
</dbReference>
<dbReference type="GO" id="GO:0044218">
    <property type="term" value="C:other organism cell membrane"/>
    <property type="evidence" value="ECO:0007669"/>
    <property type="project" value="UniProtKB-KW"/>
</dbReference>
<dbReference type="GO" id="GO:0090729">
    <property type="term" value="F:toxin activity"/>
    <property type="evidence" value="ECO:0007669"/>
    <property type="project" value="UniProtKB-KW"/>
</dbReference>
<dbReference type="GO" id="GO:0031640">
    <property type="term" value="P:killing of cells of another organism"/>
    <property type="evidence" value="ECO:0007669"/>
    <property type="project" value="UniProtKB-KW"/>
</dbReference>
<dbReference type="CDD" id="cd00206">
    <property type="entry name" value="TFP_snake_toxin"/>
    <property type="match status" value="1"/>
</dbReference>
<dbReference type="FunFam" id="2.10.60.10:FF:000024">
    <property type="entry name" value="Cytotoxin 1"/>
    <property type="match status" value="1"/>
</dbReference>
<dbReference type="Gene3D" id="2.10.60.10">
    <property type="entry name" value="CD59"/>
    <property type="match status" value="1"/>
</dbReference>
<dbReference type="InterPro" id="IPR003572">
    <property type="entry name" value="Cytotoxin_Cobra"/>
</dbReference>
<dbReference type="InterPro" id="IPR003571">
    <property type="entry name" value="Snake_3FTx"/>
</dbReference>
<dbReference type="InterPro" id="IPR045860">
    <property type="entry name" value="Snake_toxin-like_sf"/>
</dbReference>
<dbReference type="InterPro" id="IPR018354">
    <property type="entry name" value="Snake_toxin_con_site"/>
</dbReference>
<dbReference type="InterPro" id="IPR054131">
    <property type="entry name" value="Toxin_cobra-type"/>
</dbReference>
<dbReference type="Pfam" id="PF21947">
    <property type="entry name" value="Toxin_cobra-type"/>
    <property type="match status" value="1"/>
</dbReference>
<dbReference type="PRINTS" id="PR00282">
    <property type="entry name" value="CYTOTOXIN"/>
</dbReference>
<dbReference type="SUPFAM" id="SSF57302">
    <property type="entry name" value="Snake toxin-like"/>
    <property type="match status" value="1"/>
</dbReference>
<dbReference type="PROSITE" id="PS00272">
    <property type="entry name" value="SNAKE_TOXIN"/>
    <property type="match status" value="1"/>
</dbReference>
<evidence type="ECO:0000250" key="1">
    <source>
        <dbReference type="UniProtKB" id="P60301"/>
    </source>
</evidence>
<evidence type="ECO:0000250" key="2">
    <source>
        <dbReference type="UniProtKB" id="P60304"/>
    </source>
</evidence>
<evidence type="ECO:0000269" key="3">
    <source>
    </source>
</evidence>
<evidence type="ECO:0000269" key="4">
    <source>
    </source>
</evidence>
<evidence type="ECO:0000303" key="5">
    <source>
    </source>
</evidence>
<evidence type="ECO:0000303" key="6">
    <source>
    </source>
</evidence>
<evidence type="ECO:0000305" key="7"/>
<organism>
    <name type="scientific">Naja naja</name>
    <name type="common">Indian cobra</name>
    <dbReference type="NCBI Taxonomy" id="35670"/>
    <lineage>
        <taxon>Eukaryota</taxon>
        <taxon>Metazoa</taxon>
        <taxon>Chordata</taxon>
        <taxon>Craniata</taxon>
        <taxon>Vertebrata</taxon>
        <taxon>Euteleostomi</taxon>
        <taxon>Lepidosauria</taxon>
        <taxon>Squamata</taxon>
        <taxon>Bifurcata</taxon>
        <taxon>Unidentata</taxon>
        <taxon>Episquamata</taxon>
        <taxon>Toxicofera</taxon>
        <taxon>Serpentes</taxon>
        <taxon>Colubroidea</taxon>
        <taxon>Elapidae</taxon>
        <taxon>Elapinae</taxon>
        <taxon>Naja</taxon>
    </lineage>
</organism>
<accession>P86382</accession>